<organism>
    <name type="scientific">Escherichia coli (strain K12)</name>
    <dbReference type="NCBI Taxonomy" id="83333"/>
    <lineage>
        <taxon>Bacteria</taxon>
        <taxon>Pseudomonadati</taxon>
        <taxon>Pseudomonadota</taxon>
        <taxon>Gammaproteobacteria</taxon>
        <taxon>Enterobacterales</taxon>
        <taxon>Enterobacteriaceae</taxon>
        <taxon>Escherichia</taxon>
    </lineage>
</organism>
<reference key="1">
    <citation type="journal article" date="1992" name="J. Bacteriol.">
        <title>Molecular characterization of the Entner-Doudoroff pathway in Escherichia coli: sequence analysis and localization of promoters for the edd-eda operon.</title>
        <authorList>
            <person name="Egan S.E."/>
            <person name="Fliege R."/>
            <person name="Tong S."/>
            <person name="Shibata A."/>
            <person name="Wolf R.E. Jr."/>
            <person name="Conway T."/>
        </authorList>
    </citation>
    <scope>NUCLEOTIDE SEQUENCE [GENOMIC DNA]</scope>
    <scope>INDUCTION</scope>
</reference>
<reference key="2">
    <citation type="journal article" date="1993" name="Gene">
        <title>Sequence of the Escherichia coli K-12 edd and eda genes of the Entner-Doudoroff pathway.</title>
        <authorList>
            <person name="Carter A.T."/>
            <person name="Pearson B.M."/>
            <person name="Dickinson J.R."/>
            <person name="Lancashire W.E."/>
        </authorList>
    </citation>
    <scope>NUCLEOTIDE SEQUENCE [GENOMIC DNA]</scope>
    <source>
        <strain>K12</strain>
    </source>
</reference>
<reference key="3">
    <citation type="journal article" date="1996" name="DNA Res.">
        <title>A 460-kb DNA sequence of the Escherichia coli K-12 genome corresponding to the 40.1-50.0 min region on the linkage map.</title>
        <authorList>
            <person name="Itoh T."/>
            <person name="Aiba H."/>
            <person name="Baba T."/>
            <person name="Fujita K."/>
            <person name="Hayashi K."/>
            <person name="Inada T."/>
            <person name="Isono K."/>
            <person name="Kasai H."/>
            <person name="Kimura S."/>
            <person name="Kitakawa M."/>
            <person name="Kitagawa M."/>
            <person name="Makino K."/>
            <person name="Miki T."/>
            <person name="Mizobuchi K."/>
            <person name="Mori H."/>
            <person name="Mori T."/>
            <person name="Motomura K."/>
            <person name="Nakade S."/>
            <person name="Nakamura Y."/>
            <person name="Nashimoto H."/>
            <person name="Nishio Y."/>
            <person name="Oshima T."/>
            <person name="Saito N."/>
            <person name="Sampei G."/>
            <person name="Seki Y."/>
            <person name="Sivasundaram S."/>
            <person name="Tagami H."/>
            <person name="Takeda J."/>
            <person name="Takemoto K."/>
            <person name="Wada C."/>
            <person name="Yamamoto Y."/>
            <person name="Horiuchi T."/>
        </authorList>
    </citation>
    <scope>NUCLEOTIDE SEQUENCE [LARGE SCALE GENOMIC DNA]</scope>
    <source>
        <strain>K12 / W3110 / ATCC 27325 / DSM 5911</strain>
    </source>
</reference>
<reference key="4">
    <citation type="journal article" date="1997" name="Science">
        <title>The complete genome sequence of Escherichia coli K-12.</title>
        <authorList>
            <person name="Blattner F.R."/>
            <person name="Plunkett G. III"/>
            <person name="Bloch C.A."/>
            <person name="Perna N.T."/>
            <person name="Burland V."/>
            <person name="Riley M."/>
            <person name="Collado-Vides J."/>
            <person name="Glasner J.D."/>
            <person name="Rode C.K."/>
            <person name="Mayhew G.F."/>
            <person name="Gregor J."/>
            <person name="Davis N.W."/>
            <person name="Kirkpatrick H.A."/>
            <person name="Goeden M.A."/>
            <person name="Rose D.J."/>
            <person name="Mau B."/>
            <person name="Shao Y."/>
        </authorList>
    </citation>
    <scope>NUCLEOTIDE SEQUENCE [LARGE SCALE GENOMIC DNA]</scope>
    <source>
        <strain>K12 / MG1655 / ATCC 47076</strain>
    </source>
</reference>
<reference key="5">
    <citation type="journal article" date="2006" name="Mol. Syst. Biol.">
        <title>Highly accurate genome sequences of Escherichia coli K-12 strains MG1655 and W3110.</title>
        <authorList>
            <person name="Hayashi K."/>
            <person name="Morooka N."/>
            <person name="Yamamoto Y."/>
            <person name="Fujita K."/>
            <person name="Isono K."/>
            <person name="Choi S."/>
            <person name="Ohtsubo E."/>
            <person name="Baba T."/>
            <person name="Wanner B.L."/>
            <person name="Mori H."/>
            <person name="Horiuchi T."/>
        </authorList>
    </citation>
    <scope>NUCLEOTIDE SEQUENCE [LARGE SCALE GENOMIC DNA]</scope>
    <source>
        <strain>K12 / W3110 / ATCC 27325 / DSM 5911</strain>
    </source>
</reference>
<reference key="6">
    <citation type="submission" date="1993-07" db="EMBL/GenBank/DDBJ databases">
        <title>Purine and one-carbon metabolism in Escherichia coli K12: DNA sequence of a second GAR transformylase.</title>
        <authorList>
            <person name="Smith J.M."/>
            <person name="Nygaard P."/>
        </authorList>
    </citation>
    <scope>NUCLEOTIDE SEQUENCE [GENOMIC DNA] OF 238-603</scope>
    <source>
        <strain>K12</strain>
    </source>
</reference>
<reference key="7">
    <citation type="journal article" date="1967" name="J. Bacteriol.">
        <title>Glucose and gluconate metabolism in a mutant of Escherichia coli lacking gluconate-6-phosphate dehydrase.</title>
        <authorList>
            <person name="Zablotny R."/>
            <person name="Fraenkel D.G."/>
        </authorList>
    </citation>
    <scope>DISRUPTION PHENOTYPE</scope>
    <scope>PATHWAY</scope>
</reference>
<reference key="8">
    <citation type="journal article" date="1991" name="J. Biol. Chem.">
        <title>Superoxide sensitivity of the Escherichia coli 6-phosphogluconate dehydratase.</title>
        <authorList>
            <person name="Gardner P.R."/>
            <person name="Fridovich I."/>
        </authorList>
    </citation>
    <scope>FUNCTION</scope>
    <scope>CATALYTIC ACTIVITY</scope>
    <scope>ACTIVITY REGULATION</scope>
</reference>
<reference key="9">
    <citation type="journal article" date="2007" name="J. Biol. Chem.">
        <title>Micromolar intracellular hydrogen peroxide disrupts metabolism by damaging iron-sulfur enzymes.</title>
        <authorList>
            <person name="Jang S."/>
            <person name="Imlay J.A."/>
        </authorList>
    </citation>
    <scope>FUNCTION</scope>
    <scope>CATALYTIC ACTIVITY</scope>
    <scope>ACTIVITY REGULATION</scope>
    <source>
        <strain>K12 / MG1655 / ATCC 47076</strain>
    </source>
</reference>
<name>EDD_ECOLI</name>
<comment type="function">
    <text evidence="2 4 5">Catalyzes the dehydration of 6-phospho-D-gluconate to 2-dehydro-3-deoxy-6-phospho-D-gluconate.</text>
</comment>
<comment type="catalytic activity">
    <reaction evidence="2 4 5">
        <text>6-phospho-D-gluconate = 2-dehydro-3-deoxy-6-phospho-D-gluconate + H2O</text>
        <dbReference type="Rhea" id="RHEA:17277"/>
        <dbReference type="ChEBI" id="CHEBI:15377"/>
        <dbReference type="ChEBI" id="CHEBI:57569"/>
        <dbReference type="ChEBI" id="CHEBI:58759"/>
        <dbReference type="EC" id="4.2.1.12"/>
    </reaction>
</comment>
<comment type="cofactor">
    <cofactor evidence="1 2 10">
        <name>[4Fe-4S] cluster</name>
        <dbReference type="ChEBI" id="CHEBI:49883"/>
    </cofactor>
    <text evidence="1 2">Binds 1 [4Fe-4S] cluster.</text>
</comment>
<comment type="activity regulation">
    <text evidence="4 5">Sensitive to oxidants such as superoxide or hydrogen peroxide.</text>
</comment>
<comment type="pathway">
    <text evidence="2 6">Carbohydrate metabolism; Entner-Doudoroff pathway.</text>
</comment>
<comment type="induction">
    <text evidence="3">By growth on gluconate.</text>
</comment>
<comment type="disruption phenotype">
    <text evidence="6">The mutant grows at normal rates on glucose and fructose, whereas on gluconate it grows about one-third as fast as the wild-type.</text>
</comment>
<comment type="similarity">
    <text evidence="2 9">Belongs to the IlvD/Edd family.</text>
</comment>
<gene>
    <name evidence="2 8" type="primary">edd</name>
    <name type="ordered locus">b1851</name>
    <name type="ordered locus">JW1840</name>
</gene>
<keyword id="KW-0004">4Fe-4S</keyword>
<keyword id="KW-0119">Carbohydrate metabolism</keyword>
<keyword id="KW-0311">Gluconate utilization</keyword>
<keyword id="KW-0408">Iron</keyword>
<keyword id="KW-0411">Iron-sulfur</keyword>
<keyword id="KW-0456">Lyase</keyword>
<keyword id="KW-0479">Metal-binding</keyword>
<keyword id="KW-1185">Reference proteome</keyword>
<feature type="chain" id="PRO_0000103553" description="Phosphogluconate dehydratase">
    <location>
        <begin position="1"/>
        <end position="603"/>
    </location>
</feature>
<feature type="binding site" evidence="1 2">
    <location>
        <position position="154"/>
    </location>
    <ligand>
        <name>[4Fe-4S] cluster</name>
        <dbReference type="ChEBI" id="CHEBI:49883"/>
    </ligand>
</feature>
<feature type="binding site" evidence="1 2">
    <location>
        <position position="221"/>
    </location>
    <ligand>
        <name>[4Fe-4S] cluster</name>
        <dbReference type="ChEBI" id="CHEBI:49883"/>
    </ligand>
</feature>
<feature type="sequence conflict" description="In Ref. 1; AAA23722." evidence="9" ref="1">
    <original>PLR</original>
    <variation>AC</variation>
    <location>
        <begin position="252"/>
        <end position="254"/>
    </location>
</feature>
<sequence>MNPQLLRVTNRIIERSRETRSAYLARIEQAKTSTVHRSQLACGNLAHGFAACQPEDKASLKSMLRNNIAIITSYNDMLSAHQPYEHYPEIIRKALHEANAVGQVAGGVPAMCDGVTQGQDGMELSLLSREVIAMSAAVGLSHNMFDGALFLGVCDKIVPGLTMAALSFGHLPAVFVPSGPMASGLPNKEKVRIRQLYAEGKVDRMALLESEAASYHAPGTCTFYGTANTNQMVVEFMGMQLPGSSFVHPDSPLRDALTAAAARQVTRMTGNGNEWMPIGKMIDEKVVVNGIVALLATGGSTNHTMHLVAMARAAGIQINWDDFSDLSDVVPLMARLYPNGPADINHFQAAGGVPVLVRELLKAGLLHEDVNTVAGFGLSRYTLEPWLNNGELDWREGAEKSLDSNVIASFEQPFSHHGGTKVLSGNLGRAVMKTSAVPVENQVIEAPAVVFESQHDVMPAFEAGLLDRDCVVVVRHQGPKANGMPELHKLMPPLGVLLDRCFKIALVTDGRLSGASGKVPSAIHVTPEAYDGGLLAKVRDGDIIRVNGQTGELTLLVDEAELAAREPHIPDLSASRVGTGRELFSALREKLSGAEQGATCITF</sequence>
<evidence type="ECO:0000250" key="1">
    <source>
        <dbReference type="UniProtKB" id="P05791"/>
    </source>
</evidence>
<evidence type="ECO:0000255" key="2">
    <source>
        <dbReference type="HAMAP-Rule" id="MF_02094"/>
    </source>
</evidence>
<evidence type="ECO:0000269" key="3">
    <source>
    </source>
</evidence>
<evidence type="ECO:0000269" key="4">
    <source>
    </source>
</evidence>
<evidence type="ECO:0000269" key="5">
    <source>
    </source>
</evidence>
<evidence type="ECO:0000269" key="6">
    <source>
    </source>
</evidence>
<evidence type="ECO:0000303" key="7">
    <source>
    </source>
</evidence>
<evidence type="ECO:0000303" key="8">
    <source>
    </source>
</evidence>
<evidence type="ECO:0000305" key="9"/>
<evidence type="ECO:0000305" key="10">
    <source>
    </source>
</evidence>
<proteinExistence type="evidence at protein level"/>
<protein>
    <recommendedName>
        <fullName evidence="2 9">Phosphogluconate dehydratase</fullName>
        <ecNumber evidence="2 4 5">4.2.1.12</ecNumber>
    </recommendedName>
    <alternativeName>
        <fullName evidence="7">6-phosphogluconate dehydratase</fullName>
    </alternativeName>
    <alternativeName>
        <fullName evidence="8">Entner-Doudoroff dehydrase</fullName>
    </alternativeName>
</protein>
<accession>P0ADF6</accession>
<accession>P25530</accession>
<dbReference type="EC" id="4.2.1.12" evidence="2 4 5"/>
<dbReference type="EMBL" id="M87458">
    <property type="protein sequence ID" value="AAA23722.1"/>
    <property type="molecule type" value="Genomic_DNA"/>
</dbReference>
<dbReference type="EMBL" id="X63694">
    <property type="protein sequence ID" value="CAA45221.1"/>
    <property type="molecule type" value="Genomic_DNA"/>
</dbReference>
<dbReference type="EMBL" id="U00096">
    <property type="protein sequence ID" value="AAC74921.1"/>
    <property type="molecule type" value="Genomic_DNA"/>
</dbReference>
<dbReference type="EMBL" id="AP009048">
    <property type="protein sequence ID" value="BAA15659.1"/>
    <property type="molecule type" value="Genomic_DNA"/>
</dbReference>
<dbReference type="EMBL" id="L20897">
    <property type="protein sequence ID" value="AAA23863.1"/>
    <property type="molecule type" value="Genomic_DNA"/>
</dbReference>
<dbReference type="PIR" id="A42986">
    <property type="entry name" value="A42986"/>
</dbReference>
<dbReference type="RefSeq" id="NP_416365.1">
    <property type="nucleotide sequence ID" value="NC_000913.3"/>
</dbReference>
<dbReference type="RefSeq" id="WP_001069467.1">
    <property type="nucleotide sequence ID" value="NZ_SSZK01000001.1"/>
</dbReference>
<dbReference type="SMR" id="P0ADF6"/>
<dbReference type="BioGRID" id="4261382">
    <property type="interactions" value="20"/>
</dbReference>
<dbReference type="DIP" id="DIP-47906N"/>
<dbReference type="FunCoup" id="P0ADF6">
    <property type="interactions" value="189"/>
</dbReference>
<dbReference type="IntAct" id="P0ADF6">
    <property type="interactions" value="12"/>
</dbReference>
<dbReference type="STRING" id="511145.b1851"/>
<dbReference type="PaxDb" id="511145-b1851"/>
<dbReference type="DNASU" id="946362"/>
<dbReference type="EnsemblBacteria" id="AAC74921">
    <property type="protein sequence ID" value="AAC74921"/>
    <property type="gene ID" value="b1851"/>
</dbReference>
<dbReference type="GeneID" id="86859389"/>
<dbReference type="GeneID" id="946362"/>
<dbReference type="KEGG" id="ecj:JW1840"/>
<dbReference type="KEGG" id="eco:b1851"/>
<dbReference type="KEGG" id="ecoc:C3026_10545"/>
<dbReference type="PATRIC" id="fig|511145.12.peg.1929"/>
<dbReference type="EchoBASE" id="EB0253"/>
<dbReference type="eggNOG" id="COG0129">
    <property type="taxonomic scope" value="Bacteria"/>
</dbReference>
<dbReference type="HOGENOM" id="CLU_014271_1_2_6"/>
<dbReference type="InParanoid" id="P0ADF6"/>
<dbReference type="OMA" id="HLIHWVA"/>
<dbReference type="OrthoDB" id="9807077at2"/>
<dbReference type="PhylomeDB" id="P0ADF6"/>
<dbReference type="BioCyc" id="EcoCyc:PGLUCONDEHYDRAT-MONOMER"/>
<dbReference type="BioCyc" id="MetaCyc:PGLUCONDEHYDRAT-MONOMER"/>
<dbReference type="UniPathway" id="UPA00226"/>
<dbReference type="PRO" id="PR:P0ADF6"/>
<dbReference type="Proteomes" id="UP000000625">
    <property type="component" value="Chromosome"/>
</dbReference>
<dbReference type="GO" id="GO:0005829">
    <property type="term" value="C:cytosol"/>
    <property type="evidence" value="ECO:0000318"/>
    <property type="project" value="GO_Central"/>
</dbReference>
<dbReference type="GO" id="GO:0051539">
    <property type="term" value="F:4 iron, 4 sulfur cluster binding"/>
    <property type="evidence" value="ECO:0007669"/>
    <property type="project" value="UniProtKB-UniRule"/>
</dbReference>
<dbReference type="GO" id="GO:0046872">
    <property type="term" value="F:metal ion binding"/>
    <property type="evidence" value="ECO:0007669"/>
    <property type="project" value="UniProtKB-KW"/>
</dbReference>
<dbReference type="GO" id="GO:0004456">
    <property type="term" value="F:phosphogluconate dehydratase activity"/>
    <property type="evidence" value="ECO:0000314"/>
    <property type="project" value="EcoCyc"/>
</dbReference>
<dbReference type="GO" id="GO:0019521">
    <property type="term" value="P:D-gluconate metabolic process"/>
    <property type="evidence" value="ECO:0007669"/>
    <property type="project" value="UniProtKB-KW"/>
</dbReference>
<dbReference type="GO" id="GO:0009255">
    <property type="term" value="P:Entner-Doudoroff pathway through 6-phosphogluconate"/>
    <property type="evidence" value="ECO:0007669"/>
    <property type="project" value="UniProtKB-UniRule"/>
</dbReference>
<dbReference type="FunFam" id="3.50.30.80:FF:000001">
    <property type="entry name" value="Dihydroxy-acid dehydratase"/>
    <property type="match status" value="1"/>
</dbReference>
<dbReference type="Gene3D" id="3.50.30.80">
    <property type="entry name" value="IlvD/EDD C-terminal domain-like"/>
    <property type="match status" value="1"/>
</dbReference>
<dbReference type="HAMAP" id="MF_02094">
    <property type="entry name" value="Edd"/>
    <property type="match status" value="1"/>
</dbReference>
<dbReference type="InterPro" id="IPR004786">
    <property type="entry name" value="6-phosphgluc_deHydtase"/>
</dbReference>
<dbReference type="InterPro" id="IPR042096">
    <property type="entry name" value="Dihydro-acid_dehy_C"/>
</dbReference>
<dbReference type="InterPro" id="IPR020558">
    <property type="entry name" value="DiOHA_6PGluconate_deHydtase_CS"/>
</dbReference>
<dbReference type="InterPro" id="IPR056740">
    <property type="entry name" value="ILV_EDD_C"/>
</dbReference>
<dbReference type="InterPro" id="IPR000581">
    <property type="entry name" value="ILV_EDD_N"/>
</dbReference>
<dbReference type="InterPro" id="IPR037237">
    <property type="entry name" value="IlvD/EDD_N"/>
</dbReference>
<dbReference type="NCBIfam" id="TIGR01196">
    <property type="entry name" value="edd"/>
    <property type="match status" value="1"/>
</dbReference>
<dbReference type="PANTHER" id="PTHR43661">
    <property type="entry name" value="D-XYLONATE DEHYDRATASE"/>
    <property type="match status" value="1"/>
</dbReference>
<dbReference type="PANTHER" id="PTHR43661:SF1">
    <property type="entry name" value="PHOSPHOGLUCONATE DEHYDRATASE"/>
    <property type="match status" value="1"/>
</dbReference>
<dbReference type="Pfam" id="PF24877">
    <property type="entry name" value="ILV_EDD_C"/>
    <property type="match status" value="1"/>
</dbReference>
<dbReference type="Pfam" id="PF00920">
    <property type="entry name" value="ILVD_EDD_N"/>
    <property type="match status" value="1"/>
</dbReference>
<dbReference type="SUPFAM" id="SSF143975">
    <property type="entry name" value="IlvD/EDD N-terminal domain-like"/>
    <property type="match status" value="1"/>
</dbReference>
<dbReference type="SUPFAM" id="SSF52016">
    <property type="entry name" value="LeuD/IlvD-like"/>
    <property type="match status" value="1"/>
</dbReference>
<dbReference type="PROSITE" id="PS00886">
    <property type="entry name" value="ILVD_EDD_1"/>
    <property type="match status" value="1"/>
</dbReference>
<dbReference type="PROSITE" id="PS00887">
    <property type="entry name" value="ILVD_EDD_2"/>
    <property type="match status" value="1"/>
</dbReference>